<comment type="similarity">
    <text evidence="1">Belongs to the herpesviridae UL79 family.</text>
</comment>
<name>UL79_ALHV1</name>
<proteinExistence type="inferred from homology"/>
<keyword id="KW-1185">Reference proteome</keyword>
<reference key="1">
    <citation type="journal article" date="1997" name="J. Virol.">
        <title>Primary structure of the alcelaphine herpesvirus 1 genome.</title>
        <authorList>
            <person name="Ensser A."/>
            <person name="Pflanz R."/>
            <person name="Fleckenstein B."/>
        </authorList>
    </citation>
    <scope>NUCLEOTIDE SEQUENCE [LARGE SCALE GENOMIC DNA]</scope>
</reference>
<protein>
    <recommendedName>
        <fullName>Gene 18 protein</fullName>
    </recommendedName>
</protein>
<organismHost>
    <name type="scientific">Connochaetes taurinus</name>
    <name type="common">Blue wildebeest</name>
    <dbReference type="NCBI Taxonomy" id="9927"/>
</organismHost>
<evidence type="ECO:0000305" key="1"/>
<organism>
    <name type="scientific">Alcelaphine herpesvirus 1 (strain C500)</name>
    <name type="common">AlHV-1</name>
    <name type="synonym">Malignant catarrhal fever virus</name>
    <dbReference type="NCBI Taxonomy" id="654901"/>
    <lineage>
        <taxon>Viruses</taxon>
        <taxon>Duplodnaviria</taxon>
        <taxon>Heunggongvirae</taxon>
        <taxon>Peploviricota</taxon>
        <taxon>Herviviricetes</taxon>
        <taxon>Herpesvirales</taxon>
        <taxon>Orthoherpesviridae</taxon>
        <taxon>Gammaherpesvirinae</taxon>
        <taxon>Macavirus</taxon>
        <taxon>Macavirus alcelaphinegamma1</taxon>
    </lineage>
</organism>
<feature type="chain" id="PRO_0000405743" description="Gene 18 protein">
    <location>
        <begin position="1"/>
        <end position="275"/>
    </location>
</feature>
<sequence length="275" mass="30703">MSTNPATNSESLDILGRYVSAGPGFSPGVRALLFKLLGGKTLNTLTPEELRFSHLVVSKMYELGLNVFLLREAVANCGVTDAVILERKVPVEFWKILFDGCVALGVKEDMLLSEAGRSQLWLHLNKNPQLLKGLAGYVLRRLGLCQHVKVHPQNLLDGNFLFNLGSVFSCRLLMVAAFCLLFWGRPEVEPWVRTFVTKIYVLYLIIVGALRINFSVFELSTQNGYCGILEAICSDLMAVAGHGGEGSRERQWHAWLDYLFIFNNNVVLHNSNRDG</sequence>
<dbReference type="EMBL" id="AF005370">
    <property type="protein sequence ID" value="AAC58065.1"/>
    <property type="molecule type" value="Genomic_DNA"/>
</dbReference>
<dbReference type="PIR" id="T03113">
    <property type="entry name" value="T03113"/>
</dbReference>
<dbReference type="RefSeq" id="NP_065517.1">
    <property type="nucleotide sequence ID" value="NC_002531.1"/>
</dbReference>
<dbReference type="SMR" id="O36368"/>
<dbReference type="KEGG" id="vg:911753"/>
<dbReference type="Proteomes" id="UP000000941">
    <property type="component" value="Segment"/>
</dbReference>
<dbReference type="InterPro" id="IPR004290">
    <property type="entry name" value="Herpes_UL79"/>
</dbReference>
<dbReference type="Pfam" id="PF03049">
    <property type="entry name" value="Herpes_UL79"/>
    <property type="match status" value="1"/>
</dbReference>
<accession>O36368</accession>
<gene>
    <name type="primary">18</name>
</gene>